<protein>
    <recommendedName>
        <fullName>Protein NRT1/ PTR FAMILY 4.2</fullName>
        <shortName>AtNPF4.2</shortName>
    </recommendedName>
    <alternativeName>
        <fullName>Protein ABA-IMPORTING TRANSPORTER 4</fullName>
    </alternativeName>
</protein>
<feature type="chain" id="PRO_0000399969" description="Protein NRT1/ PTR FAMILY 4.2">
    <location>
        <begin position="1"/>
        <end position="521"/>
    </location>
</feature>
<feature type="transmembrane region" description="Helical" evidence="2">
    <location>
        <begin position="30"/>
        <end position="50"/>
    </location>
</feature>
<feature type="transmembrane region" description="Helical" evidence="2">
    <location>
        <begin position="65"/>
        <end position="85"/>
    </location>
</feature>
<feature type="transmembrane region" description="Helical" evidence="2">
    <location>
        <begin position="89"/>
        <end position="109"/>
    </location>
</feature>
<feature type="transmembrane region" description="Helical" evidence="2">
    <location>
        <begin position="133"/>
        <end position="153"/>
    </location>
</feature>
<feature type="transmembrane region" description="Helical" evidence="2">
    <location>
        <begin position="172"/>
        <end position="192"/>
    </location>
</feature>
<feature type="transmembrane region" description="Helical" evidence="2">
    <location>
        <begin position="204"/>
        <end position="224"/>
    </location>
</feature>
<feature type="transmembrane region" description="Helical" evidence="2">
    <location>
        <begin position="297"/>
        <end position="317"/>
    </location>
</feature>
<feature type="transmembrane region" description="Helical" evidence="2">
    <location>
        <begin position="338"/>
        <end position="358"/>
    </location>
</feature>
<feature type="transmembrane region" description="Helical" evidence="2">
    <location>
        <begin position="381"/>
        <end position="401"/>
    </location>
</feature>
<feature type="transmembrane region" description="Helical" evidence="2">
    <location>
        <begin position="413"/>
        <end position="433"/>
    </location>
</feature>
<feature type="transmembrane region" description="Helical" evidence="2">
    <location>
        <begin position="451"/>
        <end position="471"/>
    </location>
</feature>
<feature type="transmembrane region" description="Helical" evidence="2">
    <location>
        <begin position="498"/>
        <end position="518"/>
    </location>
</feature>
<dbReference type="EMBL" id="AB026647">
    <property type="protein sequence ID" value="BAB02087.1"/>
    <property type="molecule type" value="Genomic_DNA"/>
</dbReference>
<dbReference type="EMBL" id="CP002686">
    <property type="protein sequence ID" value="AEE77004.1"/>
    <property type="molecule type" value="Genomic_DNA"/>
</dbReference>
<dbReference type="RefSeq" id="NP_189165.1">
    <property type="nucleotide sequence ID" value="NM_113434.1"/>
</dbReference>
<dbReference type="SMR" id="Q9LSE8"/>
<dbReference type="STRING" id="3702.Q9LSE8"/>
<dbReference type="TCDB" id="2.A.17.3.12">
    <property type="family name" value="the proton-dependent oligopeptide transporter (pot/ptr) family"/>
</dbReference>
<dbReference type="iPTMnet" id="Q9LSE8"/>
<dbReference type="PaxDb" id="3702-AT3G25280.1"/>
<dbReference type="ProteomicsDB" id="226421"/>
<dbReference type="EnsemblPlants" id="AT3G25280.1">
    <property type="protein sequence ID" value="AT3G25280.1"/>
    <property type="gene ID" value="AT3G25280"/>
</dbReference>
<dbReference type="GeneID" id="822122"/>
<dbReference type="Gramene" id="AT3G25280.1">
    <property type="protein sequence ID" value="AT3G25280.1"/>
    <property type="gene ID" value="AT3G25280"/>
</dbReference>
<dbReference type="KEGG" id="ath:AT3G25280"/>
<dbReference type="Araport" id="AT3G25280"/>
<dbReference type="TAIR" id="AT3G25280">
    <property type="gene designation" value="NPF4.2"/>
</dbReference>
<dbReference type="eggNOG" id="KOG1237">
    <property type="taxonomic scope" value="Eukaryota"/>
</dbReference>
<dbReference type="HOGENOM" id="CLU_009313_4_0_1"/>
<dbReference type="InParanoid" id="Q9LSE8"/>
<dbReference type="OMA" id="LNYNFWM"/>
<dbReference type="PhylomeDB" id="Q9LSE8"/>
<dbReference type="PRO" id="PR:Q9LSE8"/>
<dbReference type="Proteomes" id="UP000006548">
    <property type="component" value="Chromosome 3"/>
</dbReference>
<dbReference type="ExpressionAtlas" id="Q9LSE8">
    <property type="expression patterns" value="baseline and differential"/>
</dbReference>
<dbReference type="GO" id="GO:0016020">
    <property type="term" value="C:membrane"/>
    <property type="evidence" value="ECO:0007669"/>
    <property type="project" value="UniProtKB-SubCell"/>
</dbReference>
<dbReference type="GO" id="GO:0022857">
    <property type="term" value="F:transmembrane transporter activity"/>
    <property type="evidence" value="ECO:0007669"/>
    <property type="project" value="InterPro"/>
</dbReference>
<dbReference type="FunFam" id="1.20.1250.20:FF:000975">
    <property type="entry name" value="Proton-dependent oligopeptide transport family protein"/>
    <property type="match status" value="1"/>
</dbReference>
<dbReference type="Gene3D" id="1.20.1250.20">
    <property type="entry name" value="MFS general substrate transporter like domains"/>
    <property type="match status" value="1"/>
</dbReference>
<dbReference type="InterPro" id="IPR036259">
    <property type="entry name" value="MFS_trans_sf"/>
</dbReference>
<dbReference type="InterPro" id="IPR000109">
    <property type="entry name" value="POT_fam"/>
</dbReference>
<dbReference type="PANTHER" id="PTHR11654">
    <property type="entry name" value="OLIGOPEPTIDE TRANSPORTER-RELATED"/>
    <property type="match status" value="1"/>
</dbReference>
<dbReference type="Pfam" id="PF00854">
    <property type="entry name" value="PTR2"/>
    <property type="match status" value="1"/>
</dbReference>
<dbReference type="SUPFAM" id="SSF103473">
    <property type="entry name" value="MFS general substrate transporter"/>
    <property type="match status" value="1"/>
</dbReference>
<sequence length="521" mass="58353">MENDMEEKFEDWKGKEAIPGKHGGIRAASIVCVVVMMENIVFIANGFNFVKYFMGSMHYTPATAANMVTNFMGTSFLLTLFGGFIADSFVTHFTTFIVFCCIELMGLILLTFQAHNPKLLPEKDKTPSTLQSAILFTGLYAMAIGTGGLKASLPSHGGDQIDRRNPRLISRFFDWLYFSICSGCLLAVTVVLWIEEKKGWIWSFNISVGILATALCIFTVGLPFYRFKRPNGSPLKKIAIVIISAARNRNKSDLDEEMMRGLISIYKNNSHNKLKWIDKATLNKNISETEVEETRTFLGLLPIFGSTIVMSCCVAQLSTFSAQQGMLMNKKLFHSFEIPVPSLTAIPLIFMLLSIPLYEFFGKKISSGNNNRSSSFNLKRIGLGLALSSVSMAVSAIVEAKRKHEVVHNNFRISVLWLVFQYLMLSVSDMLTLGGMLEFFYREAPSNMKSISTALGWCSTALGFFLSTTLVEVTNAVTGRLGHQWLGGEDLNKTRLELFYVLLCVLNTLNLLNYIFWAKRY</sequence>
<keyword id="KW-0472">Membrane</keyword>
<keyword id="KW-1185">Reference proteome</keyword>
<keyword id="KW-0812">Transmembrane</keyword>
<keyword id="KW-1133">Transmembrane helix</keyword>
<keyword id="KW-0813">Transport</keyword>
<accession>Q9LSE8</accession>
<gene>
    <name type="primary">NPF4.2</name>
    <name type="synonym">AIT4</name>
    <name type="ordered locus">At3g25280</name>
    <name type="ORF">MJL12.24</name>
</gene>
<evidence type="ECO:0000250" key="1"/>
<evidence type="ECO:0000255" key="2"/>
<evidence type="ECO:0000269" key="3">
    <source>
    </source>
</evidence>
<evidence type="ECO:0000269" key="4">
    <source>
    </source>
</evidence>
<evidence type="ECO:0000305" key="5"/>
<name>PTR35_ARATH</name>
<comment type="function">
    <text evidence="4">Involved in abscisic acid transport.</text>
</comment>
<comment type="subcellular location">
    <subcellularLocation>
        <location evidence="1">Membrane</location>
        <topology evidence="1">Multi-pass membrane protein</topology>
    </subcellularLocation>
</comment>
<comment type="tissue specificity">
    <text evidence="3">Expressed in siliques.</text>
</comment>
<comment type="similarity">
    <text evidence="5">Belongs to the major facilitator superfamily. Proton-dependent oligopeptide transporter (POT/PTR) (TC 2.A.17) family.</text>
</comment>
<organism>
    <name type="scientific">Arabidopsis thaliana</name>
    <name type="common">Mouse-ear cress</name>
    <dbReference type="NCBI Taxonomy" id="3702"/>
    <lineage>
        <taxon>Eukaryota</taxon>
        <taxon>Viridiplantae</taxon>
        <taxon>Streptophyta</taxon>
        <taxon>Embryophyta</taxon>
        <taxon>Tracheophyta</taxon>
        <taxon>Spermatophyta</taxon>
        <taxon>Magnoliopsida</taxon>
        <taxon>eudicotyledons</taxon>
        <taxon>Gunneridae</taxon>
        <taxon>Pentapetalae</taxon>
        <taxon>rosids</taxon>
        <taxon>malvids</taxon>
        <taxon>Brassicales</taxon>
        <taxon>Brassicaceae</taxon>
        <taxon>Camelineae</taxon>
        <taxon>Arabidopsis</taxon>
    </lineage>
</organism>
<reference key="1">
    <citation type="journal article" date="2000" name="DNA Res.">
        <title>Structural analysis of Arabidopsis thaliana chromosome 3. I. Sequence features of the regions of 4,504,864 bp covered by sixty P1 and TAC clones.</title>
        <authorList>
            <person name="Sato S."/>
            <person name="Nakamura Y."/>
            <person name="Kaneko T."/>
            <person name="Katoh T."/>
            <person name="Asamizu E."/>
            <person name="Tabata S."/>
        </authorList>
    </citation>
    <scope>NUCLEOTIDE SEQUENCE [LARGE SCALE GENOMIC DNA]</scope>
    <source>
        <strain>cv. Columbia</strain>
    </source>
</reference>
<reference key="2">
    <citation type="journal article" date="2017" name="Plant J.">
        <title>Araport11: a complete reannotation of the Arabidopsis thaliana reference genome.</title>
        <authorList>
            <person name="Cheng C.Y."/>
            <person name="Krishnakumar V."/>
            <person name="Chan A.P."/>
            <person name="Thibaud-Nissen F."/>
            <person name="Schobel S."/>
            <person name="Town C.D."/>
        </authorList>
    </citation>
    <scope>GENOME REANNOTATION</scope>
    <source>
        <strain>cv. Columbia</strain>
    </source>
</reference>
<reference key="3">
    <citation type="journal article" date="2007" name="FEBS Lett.">
        <title>Nitrate transporters and peptide transporters.</title>
        <authorList>
            <person name="Tsay Y.F."/>
            <person name="Chiu C.C."/>
            <person name="Tsai C.B."/>
            <person name="Ho C.H."/>
            <person name="Hsu P.K."/>
        </authorList>
    </citation>
    <scope>TISSUE SPECIFICITY</scope>
    <scope>GENE FAMILY</scope>
</reference>
<reference key="4">
    <citation type="journal article" date="2010" name="Plant Cell">
        <title>The Arabidopsis nitrate transporter NRT1.8 functions in nitrate removal from the xylem sap and mediates cadmium tolerance.</title>
        <authorList>
            <person name="Li J.Y."/>
            <person name="Fu Y.L."/>
            <person name="Pike S.M."/>
            <person name="Bao J."/>
            <person name="Tian W."/>
            <person name="Zhang Y."/>
            <person name="Chen C.Z."/>
            <person name="Zhang Y."/>
            <person name="Li H.M."/>
            <person name="Huang J."/>
            <person name="Li L.G."/>
            <person name="Schroeder J.I."/>
            <person name="Gassmann W."/>
            <person name="Gong J.M."/>
        </authorList>
    </citation>
    <scope>GENE FAMILY</scope>
</reference>
<reference key="5">
    <citation type="journal article" date="2012" name="Proc. Natl. Acad. Sci. U.S.A.">
        <title>Identification of an abscisic acid transporter by functional screening using the receptor complex as a sensor.</title>
        <authorList>
            <person name="Kanno Y."/>
            <person name="Hanada A."/>
            <person name="Chiba Y."/>
            <person name="Ichikawa T."/>
            <person name="Nakazawa M."/>
            <person name="Matsui M."/>
            <person name="Koshiba T."/>
            <person name="Kamiya Y."/>
            <person name="Seo M."/>
        </authorList>
    </citation>
    <scope>FUNCTION</scope>
</reference>
<reference key="6">
    <citation type="journal article" date="2014" name="Trends Plant Sci.">
        <title>A unified nomenclature of NITRATE TRANSPORTER 1/PEPTIDE TRANSPORTER family members in plants.</title>
        <authorList>
            <person name="Leran S."/>
            <person name="Varala K."/>
            <person name="Boyer J.C."/>
            <person name="Chiurazzi M."/>
            <person name="Crawford N."/>
            <person name="Daniel-Vedele F."/>
            <person name="David L."/>
            <person name="Dickstein R."/>
            <person name="Fernandez E."/>
            <person name="Forde B."/>
            <person name="Gassmann W."/>
            <person name="Geiger D."/>
            <person name="Gojon A."/>
            <person name="Gong J.M."/>
            <person name="Halkier B.A."/>
            <person name="Harris J.M."/>
            <person name="Hedrich R."/>
            <person name="Limami A.M."/>
            <person name="Rentsch D."/>
            <person name="Seo M."/>
            <person name="Tsay Y.F."/>
            <person name="Zhang M."/>
            <person name="Coruzzi G."/>
            <person name="Lacombe B."/>
        </authorList>
    </citation>
    <scope>GENE FAMILY</scope>
    <scope>NOMENCLATURE</scope>
</reference>
<proteinExistence type="evidence at transcript level"/>